<sequence length="163" mass="18608">MLKRSLLFLTVLLLLFSFSSITNEVSASSSFDKGKYKKGDDASYFEPTGPYLMVNVTGVDGKRNELLSPRYVEFPIKPGTTLTKEKIEYYVEWALDATAYKEFRVVELDPSAKIEVTYYDKNKKKEETKSFPITEKGFVVPDLSEHIKNPGFNLITKVVIEKK</sequence>
<proteinExistence type="evidence at protein level"/>
<comment type="function">
    <text>Potent plasminogen activator that converts plasminogen into plasmin. It forms a 1:1 complex with plasmin, which in turn activates other plasminogen molecules.</text>
</comment>
<comment type="subcellular location">
    <subcellularLocation>
        <location>Secreted</location>
    </subcellularLocation>
</comment>
<comment type="similarity">
    <text evidence="2">Belongs to the staphylokinase family.</text>
</comment>
<keyword id="KW-0002">3D-structure</keyword>
<keyword id="KW-0617">Plasminogen activation</keyword>
<keyword id="KW-0964">Secreted</keyword>
<keyword id="KW-0732">Signal</keyword>
<gene>
    <name type="primary">sak</name>
</gene>
<organismHost>
    <name type="scientific">Staphylococcus aureus</name>
    <dbReference type="NCBI Taxonomy" id="1280"/>
</organismHost>
<dbReference type="EMBL" id="X06603">
    <property type="protein sequence ID" value="CAA29822.1"/>
    <property type="molecule type" value="Genomic_DNA"/>
</dbReference>
<dbReference type="EMBL" id="M57455">
    <property type="protein sequence ID" value="AAA98206.1"/>
    <property type="molecule type" value="Genomic_DNA"/>
</dbReference>
<dbReference type="PIR" id="S02330">
    <property type="entry name" value="S02330"/>
</dbReference>
<dbReference type="PDB" id="1BUI">
    <property type="method" value="X-ray"/>
    <property type="resolution" value="2.65 A"/>
    <property type="chains" value="C=38-163"/>
</dbReference>
<dbReference type="PDBsum" id="1BUI"/>
<dbReference type="BMRB" id="P15240"/>
<dbReference type="SMR" id="P15240"/>
<dbReference type="MEROPS" id="X46.001"/>
<dbReference type="EvolutionaryTrace" id="P15240"/>
<dbReference type="GO" id="GO:0005576">
    <property type="term" value="C:extracellular region"/>
    <property type="evidence" value="ECO:0007669"/>
    <property type="project" value="UniProtKB-SubCell"/>
</dbReference>
<dbReference type="Gene3D" id="3.10.20.130">
    <property type="match status" value="1"/>
</dbReference>
<dbReference type="InterPro" id="IPR004093">
    <property type="entry name" value="SAK"/>
</dbReference>
<dbReference type="InterPro" id="IPR036120">
    <property type="entry name" value="SAK/SK_sf"/>
</dbReference>
<dbReference type="Pfam" id="PF02821">
    <property type="entry name" value="Staphylokinase"/>
    <property type="match status" value="1"/>
</dbReference>
<dbReference type="SUPFAM" id="SSF54328">
    <property type="entry name" value="Staphylokinase/streptokinase"/>
    <property type="match status" value="1"/>
</dbReference>
<protein>
    <recommendedName>
        <fullName>Staphylokinase</fullName>
    </recommendedName>
    <alternativeName>
        <fullName>Sak42D</fullName>
    </alternativeName>
</protein>
<evidence type="ECO:0000255" key="1"/>
<evidence type="ECO:0000305" key="2"/>
<evidence type="ECO:0007829" key="3">
    <source>
        <dbReference type="PDB" id="1BUI"/>
    </source>
</evidence>
<organism>
    <name type="scientific">Staphylococcus phage 42D</name>
    <name type="common">Bacteriophage P42D</name>
    <dbReference type="NCBI Taxonomy" id="10715"/>
    <lineage>
        <taxon>Viruses</taxon>
        <taxon>Duplodnaviria</taxon>
        <taxon>Heunggongvirae</taxon>
        <taxon>Uroviricota</taxon>
        <taxon>Caudoviricetes</taxon>
        <taxon>Bronfenbrennervirinae</taxon>
        <taxon>Peeveelvirus</taxon>
        <taxon>Peeveelvirus pv13</taxon>
    </lineage>
</organism>
<reference key="1">
    <citation type="journal article" date="1987" name="Mol. Gen. Genet.">
        <title>Cloning and expression in Escherichia coli, Bacillus subtilis, and Streptococcus sanguis of a gene for staphylokinase -- a bacterial plasminogen activator.</title>
        <authorList>
            <person name="Behnke D."/>
            <person name="Gerlach D."/>
        </authorList>
    </citation>
    <scope>NUCLEOTIDE SEQUENCE [GENOMIC DNA]</scope>
</reference>
<accession>P15240</accession>
<name>SAK_BPP42</name>
<feature type="signal peptide" evidence="1">
    <location>
        <begin position="1"/>
        <end position="27"/>
    </location>
</feature>
<feature type="chain" id="PRO_0000031605" description="Staphylokinase">
    <location>
        <begin position="28"/>
        <end position="163"/>
    </location>
</feature>
<feature type="strand" evidence="3">
    <location>
        <begin position="51"/>
        <end position="54"/>
    </location>
</feature>
<feature type="strand" evidence="3">
    <location>
        <begin position="57"/>
        <end position="59"/>
    </location>
</feature>
<feature type="strand" evidence="3">
    <location>
        <begin position="61"/>
        <end position="63"/>
    </location>
</feature>
<feature type="strand" evidence="3">
    <location>
        <begin position="65"/>
        <end position="67"/>
    </location>
</feature>
<feature type="strand" evidence="3">
    <location>
        <begin position="72"/>
        <end position="75"/>
    </location>
</feature>
<feature type="helix" evidence="3">
    <location>
        <begin position="84"/>
        <end position="98"/>
    </location>
</feature>
<feature type="strand" evidence="3">
    <location>
        <begin position="105"/>
        <end position="107"/>
    </location>
</feature>
<feature type="strand" evidence="3">
    <location>
        <begin position="114"/>
        <end position="120"/>
    </location>
</feature>
<feature type="turn" evidence="3">
    <location>
        <begin position="121"/>
        <end position="124"/>
    </location>
</feature>
<feature type="strand" evidence="3">
    <location>
        <begin position="125"/>
        <end position="131"/>
    </location>
</feature>
<feature type="turn" evidence="3">
    <location>
        <begin position="144"/>
        <end position="146"/>
    </location>
</feature>
<feature type="strand" evidence="3">
    <location>
        <begin position="151"/>
        <end position="154"/>
    </location>
</feature>
<feature type="strand" evidence="3">
    <location>
        <begin position="157"/>
        <end position="160"/>
    </location>
</feature>